<name>ERA_ECOLU</name>
<dbReference type="EMBL" id="CU928163">
    <property type="protein sequence ID" value="CAR14063.1"/>
    <property type="molecule type" value="Genomic_DNA"/>
</dbReference>
<dbReference type="RefSeq" id="WP_000020737.1">
    <property type="nucleotide sequence ID" value="NC_011751.1"/>
</dbReference>
<dbReference type="RefSeq" id="YP_002413589.1">
    <property type="nucleotide sequence ID" value="NC_011751.1"/>
</dbReference>
<dbReference type="SMR" id="B7N6F4"/>
<dbReference type="STRING" id="585056.ECUMN_2887"/>
<dbReference type="GeneID" id="93774525"/>
<dbReference type="KEGG" id="eum:ECUMN_2887"/>
<dbReference type="PATRIC" id="fig|585056.7.peg.3073"/>
<dbReference type="HOGENOM" id="CLU_038009_1_2_6"/>
<dbReference type="Proteomes" id="UP000007097">
    <property type="component" value="Chromosome"/>
</dbReference>
<dbReference type="GO" id="GO:0005829">
    <property type="term" value="C:cytosol"/>
    <property type="evidence" value="ECO:0007669"/>
    <property type="project" value="TreeGrafter"/>
</dbReference>
<dbReference type="GO" id="GO:0005886">
    <property type="term" value="C:plasma membrane"/>
    <property type="evidence" value="ECO:0007669"/>
    <property type="project" value="UniProtKB-SubCell"/>
</dbReference>
<dbReference type="GO" id="GO:0005525">
    <property type="term" value="F:GTP binding"/>
    <property type="evidence" value="ECO:0007669"/>
    <property type="project" value="UniProtKB-UniRule"/>
</dbReference>
<dbReference type="GO" id="GO:0003924">
    <property type="term" value="F:GTPase activity"/>
    <property type="evidence" value="ECO:0007669"/>
    <property type="project" value="UniProtKB-UniRule"/>
</dbReference>
<dbReference type="GO" id="GO:0043024">
    <property type="term" value="F:ribosomal small subunit binding"/>
    <property type="evidence" value="ECO:0007669"/>
    <property type="project" value="TreeGrafter"/>
</dbReference>
<dbReference type="GO" id="GO:0070181">
    <property type="term" value="F:small ribosomal subunit rRNA binding"/>
    <property type="evidence" value="ECO:0007669"/>
    <property type="project" value="UniProtKB-UniRule"/>
</dbReference>
<dbReference type="GO" id="GO:0000028">
    <property type="term" value="P:ribosomal small subunit assembly"/>
    <property type="evidence" value="ECO:0007669"/>
    <property type="project" value="TreeGrafter"/>
</dbReference>
<dbReference type="CDD" id="cd04163">
    <property type="entry name" value="Era"/>
    <property type="match status" value="1"/>
</dbReference>
<dbReference type="CDD" id="cd22534">
    <property type="entry name" value="KH-II_Era"/>
    <property type="match status" value="1"/>
</dbReference>
<dbReference type="FunFam" id="3.30.300.20:FF:000003">
    <property type="entry name" value="GTPase Era"/>
    <property type="match status" value="1"/>
</dbReference>
<dbReference type="FunFam" id="3.40.50.300:FF:000094">
    <property type="entry name" value="GTPase Era"/>
    <property type="match status" value="1"/>
</dbReference>
<dbReference type="Gene3D" id="3.30.300.20">
    <property type="match status" value="1"/>
</dbReference>
<dbReference type="Gene3D" id="3.40.50.300">
    <property type="entry name" value="P-loop containing nucleotide triphosphate hydrolases"/>
    <property type="match status" value="1"/>
</dbReference>
<dbReference type="HAMAP" id="MF_00367">
    <property type="entry name" value="GTPase_Era"/>
    <property type="match status" value="1"/>
</dbReference>
<dbReference type="InterPro" id="IPR030388">
    <property type="entry name" value="G_ERA_dom"/>
</dbReference>
<dbReference type="InterPro" id="IPR006073">
    <property type="entry name" value="GTP-bd"/>
</dbReference>
<dbReference type="InterPro" id="IPR005662">
    <property type="entry name" value="GTPase_Era-like"/>
</dbReference>
<dbReference type="InterPro" id="IPR015946">
    <property type="entry name" value="KH_dom-like_a/b"/>
</dbReference>
<dbReference type="InterPro" id="IPR004044">
    <property type="entry name" value="KH_dom_type_2"/>
</dbReference>
<dbReference type="InterPro" id="IPR009019">
    <property type="entry name" value="KH_sf_prok-type"/>
</dbReference>
<dbReference type="InterPro" id="IPR027417">
    <property type="entry name" value="P-loop_NTPase"/>
</dbReference>
<dbReference type="InterPro" id="IPR005225">
    <property type="entry name" value="Small_GTP-bd"/>
</dbReference>
<dbReference type="NCBIfam" id="TIGR00436">
    <property type="entry name" value="era"/>
    <property type="match status" value="1"/>
</dbReference>
<dbReference type="NCBIfam" id="NF000908">
    <property type="entry name" value="PRK00089.1"/>
    <property type="match status" value="1"/>
</dbReference>
<dbReference type="NCBIfam" id="TIGR00231">
    <property type="entry name" value="small_GTP"/>
    <property type="match status" value="1"/>
</dbReference>
<dbReference type="PANTHER" id="PTHR42698">
    <property type="entry name" value="GTPASE ERA"/>
    <property type="match status" value="1"/>
</dbReference>
<dbReference type="PANTHER" id="PTHR42698:SF1">
    <property type="entry name" value="GTPASE ERA, MITOCHONDRIAL"/>
    <property type="match status" value="1"/>
</dbReference>
<dbReference type="Pfam" id="PF07650">
    <property type="entry name" value="KH_2"/>
    <property type="match status" value="1"/>
</dbReference>
<dbReference type="Pfam" id="PF01926">
    <property type="entry name" value="MMR_HSR1"/>
    <property type="match status" value="1"/>
</dbReference>
<dbReference type="SUPFAM" id="SSF52540">
    <property type="entry name" value="P-loop containing nucleoside triphosphate hydrolases"/>
    <property type="match status" value="1"/>
</dbReference>
<dbReference type="SUPFAM" id="SSF54814">
    <property type="entry name" value="Prokaryotic type KH domain (KH-domain type II)"/>
    <property type="match status" value="1"/>
</dbReference>
<dbReference type="PROSITE" id="PS51713">
    <property type="entry name" value="G_ERA"/>
    <property type="match status" value="1"/>
</dbReference>
<dbReference type="PROSITE" id="PS50823">
    <property type="entry name" value="KH_TYPE_2"/>
    <property type="match status" value="1"/>
</dbReference>
<proteinExistence type="inferred from homology"/>
<sequence length="301" mass="33796">MSIDKSYCGFIAIVGRPNVGKSTLLNKLLGQKISITSRKAQTTRHRIVGIHTEGAYQAIYVDTPGLHMEEKRAINRLMNKAASSSIGDVELVIFVVEGTRWTPDDEMVLNKLRDGKAPVILAVNKVDNVQEKADLLPHLQFLASQMNFLDIVPISAETGLNVDTIAAIVRKHLPEATHHFPEDYITDRSQRFMASEIIREKLMRFLGAELPYSVTVEIERFVSNERGGYDINGLILVEREGQKKMVIGNKGAKIKTIGIEARKDMQEMFEAPVHLELWVKVKSGWADDERALRSLGYVDDL</sequence>
<reference key="1">
    <citation type="journal article" date="2009" name="PLoS Genet.">
        <title>Organised genome dynamics in the Escherichia coli species results in highly diverse adaptive paths.</title>
        <authorList>
            <person name="Touchon M."/>
            <person name="Hoede C."/>
            <person name="Tenaillon O."/>
            <person name="Barbe V."/>
            <person name="Baeriswyl S."/>
            <person name="Bidet P."/>
            <person name="Bingen E."/>
            <person name="Bonacorsi S."/>
            <person name="Bouchier C."/>
            <person name="Bouvet O."/>
            <person name="Calteau A."/>
            <person name="Chiapello H."/>
            <person name="Clermont O."/>
            <person name="Cruveiller S."/>
            <person name="Danchin A."/>
            <person name="Diard M."/>
            <person name="Dossat C."/>
            <person name="Karoui M.E."/>
            <person name="Frapy E."/>
            <person name="Garry L."/>
            <person name="Ghigo J.M."/>
            <person name="Gilles A.M."/>
            <person name="Johnson J."/>
            <person name="Le Bouguenec C."/>
            <person name="Lescat M."/>
            <person name="Mangenot S."/>
            <person name="Martinez-Jehanne V."/>
            <person name="Matic I."/>
            <person name="Nassif X."/>
            <person name="Oztas S."/>
            <person name="Petit M.A."/>
            <person name="Pichon C."/>
            <person name="Rouy Z."/>
            <person name="Ruf C.S."/>
            <person name="Schneider D."/>
            <person name="Tourret J."/>
            <person name="Vacherie B."/>
            <person name="Vallenet D."/>
            <person name="Medigue C."/>
            <person name="Rocha E.P.C."/>
            <person name="Denamur E."/>
        </authorList>
    </citation>
    <scope>NUCLEOTIDE SEQUENCE [LARGE SCALE GENOMIC DNA]</scope>
    <source>
        <strain>UMN026 / ExPEC</strain>
    </source>
</reference>
<protein>
    <recommendedName>
        <fullName evidence="1">GTPase Era</fullName>
    </recommendedName>
</protein>
<comment type="function">
    <text evidence="1">An essential GTPase that binds both GDP and GTP, with rapid nucleotide exchange. Plays a role in 16S rRNA processing and 30S ribosomal subunit biogenesis and possibly also in cell cycle regulation and energy metabolism.</text>
</comment>
<comment type="subunit">
    <text evidence="1">Monomer.</text>
</comment>
<comment type="subcellular location">
    <subcellularLocation>
        <location>Cytoplasm</location>
    </subcellularLocation>
    <subcellularLocation>
        <location evidence="1">Cell inner membrane</location>
        <topology evidence="1">Peripheral membrane protein</topology>
    </subcellularLocation>
</comment>
<comment type="similarity">
    <text evidence="1 2">Belongs to the TRAFAC class TrmE-Era-EngA-EngB-Septin-like GTPase superfamily. Era GTPase family.</text>
</comment>
<keyword id="KW-0997">Cell inner membrane</keyword>
<keyword id="KW-1003">Cell membrane</keyword>
<keyword id="KW-0963">Cytoplasm</keyword>
<keyword id="KW-0342">GTP-binding</keyword>
<keyword id="KW-0472">Membrane</keyword>
<keyword id="KW-0547">Nucleotide-binding</keyword>
<keyword id="KW-0690">Ribosome biogenesis</keyword>
<keyword id="KW-0694">RNA-binding</keyword>
<keyword id="KW-0699">rRNA-binding</keyword>
<evidence type="ECO:0000255" key="1">
    <source>
        <dbReference type="HAMAP-Rule" id="MF_00367"/>
    </source>
</evidence>
<evidence type="ECO:0000255" key="2">
    <source>
        <dbReference type="PROSITE-ProRule" id="PRU01050"/>
    </source>
</evidence>
<accession>B7N6F4</accession>
<feature type="chain" id="PRO_1000121323" description="GTPase Era">
    <location>
        <begin position="1"/>
        <end position="301"/>
    </location>
</feature>
<feature type="domain" description="Era-type G" evidence="2">
    <location>
        <begin position="7"/>
        <end position="175"/>
    </location>
</feature>
<feature type="domain" description="KH type-2" evidence="1">
    <location>
        <begin position="206"/>
        <end position="283"/>
    </location>
</feature>
<feature type="region of interest" description="G1" evidence="2">
    <location>
        <begin position="15"/>
        <end position="22"/>
    </location>
</feature>
<feature type="region of interest" description="G2" evidence="2">
    <location>
        <begin position="41"/>
        <end position="45"/>
    </location>
</feature>
<feature type="region of interest" description="G3" evidence="2">
    <location>
        <begin position="62"/>
        <end position="65"/>
    </location>
</feature>
<feature type="region of interest" description="G4" evidence="2">
    <location>
        <begin position="124"/>
        <end position="127"/>
    </location>
</feature>
<feature type="region of interest" description="G5" evidence="2">
    <location>
        <begin position="154"/>
        <end position="156"/>
    </location>
</feature>
<feature type="binding site" evidence="1">
    <location>
        <begin position="15"/>
        <end position="22"/>
    </location>
    <ligand>
        <name>GTP</name>
        <dbReference type="ChEBI" id="CHEBI:37565"/>
    </ligand>
</feature>
<feature type="binding site" evidence="1">
    <location>
        <begin position="62"/>
        <end position="66"/>
    </location>
    <ligand>
        <name>GTP</name>
        <dbReference type="ChEBI" id="CHEBI:37565"/>
    </ligand>
</feature>
<feature type="binding site" evidence="1">
    <location>
        <begin position="124"/>
        <end position="127"/>
    </location>
    <ligand>
        <name>GTP</name>
        <dbReference type="ChEBI" id="CHEBI:37565"/>
    </ligand>
</feature>
<organism>
    <name type="scientific">Escherichia coli O17:K52:H18 (strain UMN026 / ExPEC)</name>
    <dbReference type="NCBI Taxonomy" id="585056"/>
    <lineage>
        <taxon>Bacteria</taxon>
        <taxon>Pseudomonadati</taxon>
        <taxon>Pseudomonadota</taxon>
        <taxon>Gammaproteobacteria</taxon>
        <taxon>Enterobacterales</taxon>
        <taxon>Enterobacteriaceae</taxon>
        <taxon>Escherichia</taxon>
    </lineage>
</organism>
<gene>
    <name evidence="1" type="primary">era</name>
    <name type="ordered locus">ECUMN_2887</name>
</gene>